<gene>
    <name evidence="1" type="primary">fabH</name>
    <name type="ordered locus">NT01CX_0921</name>
</gene>
<keyword id="KW-0012">Acyltransferase</keyword>
<keyword id="KW-0963">Cytoplasm</keyword>
<keyword id="KW-0275">Fatty acid biosynthesis</keyword>
<keyword id="KW-0276">Fatty acid metabolism</keyword>
<keyword id="KW-0444">Lipid biosynthesis</keyword>
<keyword id="KW-0443">Lipid metabolism</keyword>
<keyword id="KW-0511">Multifunctional enzyme</keyword>
<keyword id="KW-1185">Reference proteome</keyword>
<keyword id="KW-0808">Transferase</keyword>
<evidence type="ECO:0000255" key="1">
    <source>
        <dbReference type="HAMAP-Rule" id="MF_01815"/>
    </source>
</evidence>
<name>FABH_CLONN</name>
<protein>
    <recommendedName>
        <fullName evidence="1">Beta-ketoacyl-[acyl-carrier-protein] synthase III</fullName>
        <shortName evidence="1">Beta-ketoacyl-ACP synthase III</shortName>
        <shortName evidence="1">KAS III</shortName>
        <ecNumber evidence="1">2.3.1.180</ecNumber>
    </recommendedName>
    <alternativeName>
        <fullName evidence="1">3-oxoacyl-[acyl-carrier-protein] synthase 3</fullName>
    </alternativeName>
    <alternativeName>
        <fullName evidence="1">3-oxoacyl-[acyl-carrier-protein] synthase III</fullName>
    </alternativeName>
</protein>
<feature type="chain" id="PRO_1000056347" description="Beta-ketoacyl-[acyl-carrier-protein] synthase III">
    <location>
        <begin position="1"/>
        <end position="324"/>
    </location>
</feature>
<feature type="region of interest" description="ACP-binding" evidence="1">
    <location>
        <begin position="251"/>
        <end position="255"/>
    </location>
</feature>
<feature type="active site" evidence="1">
    <location>
        <position position="112"/>
    </location>
</feature>
<feature type="active site" evidence="1">
    <location>
        <position position="250"/>
    </location>
</feature>
<feature type="active site" evidence="1">
    <location>
        <position position="280"/>
    </location>
</feature>
<sequence length="324" mass="35761">MYNVKIENTGRYVPDNIVTNEDISKIVDTNDKWIRERTGIKERRISKGENTSHMAIKSAKDVLRKSSIKADELDLIIVATCTPDCFVPSTACIVQDAIGATKATCFDINAACTGFMYALSVASQFIKSGQSKNALVIGAETLSKMINWQDRGTCVLFADGAGAAILTRSEEVGLISQYTCSDGTGGKFLKCDALPVENPYVSEKTEFLNKLSMEGREVFKFAVNAMIDSVHKVLEKTDYTIEDIDYIVPHQANIRIIEYVAKKLKVSQDKFYINLHRYGNTSGASIPIALDEMNEKNMLKKGDKIILVGFGGGLTFGAHLIQWN</sequence>
<comment type="function">
    <text evidence="1">Catalyzes the condensation reaction of fatty acid synthesis by the addition to an acyl acceptor of two carbons from malonyl-ACP. Catalyzes the first condensation reaction which initiates fatty acid synthesis and may therefore play a role in governing the total rate of fatty acid production. Possesses both acetoacetyl-ACP synthase and acetyl transacylase activities. Its substrate specificity determines the biosynthesis of branched-chain and/or straight-chain of fatty acids.</text>
</comment>
<comment type="catalytic activity">
    <reaction evidence="1">
        <text>malonyl-[ACP] + acetyl-CoA + H(+) = 3-oxobutanoyl-[ACP] + CO2 + CoA</text>
        <dbReference type="Rhea" id="RHEA:12080"/>
        <dbReference type="Rhea" id="RHEA-COMP:9623"/>
        <dbReference type="Rhea" id="RHEA-COMP:9625"/>
        <dbReference type="ChEBI" id="CHEBI:15378"/>
        <dbReference type="ChEBI" id="CHEBI:16526"/>
        <dbReference type="ChEBI" id="CHEBI:57287"/>
        <dbReference type="ChEBI" id="CHEBI:57288"/>
        <dbReference type="ChEBI" id="CHEBI:78449"/>
        <dbReference type="ChEBI" id="CHEBI:78450"/>
        <dbReference type="EC" id="2.3.1.180"/>
    </reaction>
</comment>
<comment type="pathway">
    <text evidence="1">Lipid metabolism; fatty acid biosynthesis.</text>
</comment>
<comment type="subunit">
    <text evidence="1">Homodimer.</text>
</comment>
<comment type="subcellular location">
    <subcellularLocation>
        <location evidence="1">Cytoplasm</location>
    </subcellularLocation>
</comment>
<comment type="domain">
    <text evidence="1">The last Arg residue of the ACP-binding site is essential for the weak association between ACP/AcpP and FabH.</text>
</comment>
<comment type="similarity">
    <text evidence="1">Belongs to the thiolase-like superfamily. FabH family.</text>
</comment>
<dbReference type="EC" id="2.3.1.180" evidence="1"/>
<dbReference type="EMBL" id="CP000382">
    <property type="protein sequence ID" value="ABK60947.1"/>
    <property type="molecule type" value="Genomic_DNA"/>
</dbReference>
<dbReference type="RefSeq" id="WP_011721039.1">
    <property type="nucleotide sequence ID" value="NC_008593.1"/>
</dbReference>
<dbReference type="SMR" id="A0PXB6"/>
<dbReference type="STRING" id="386415.NT01CX_0921"/>
<dbReference type="KEGG" id="cno:NT01CX_0921"/>
<dbReference type="PATRIC" id="fig|386415.7.peg.45"/>
<dbReference type="eggNOG" id="COG0332">
    <property type="taxonomic scope" value="Bacteria"/>
</dbReference>
<dbReference type="HOGENOM" id="CLU_039592_3_1_9"/>
<dbReference type="UniPathway" id="UPA00094"/>
<dbReference type="Proteomes" id="UP000008220">
    <property type="component" value="Chromosome"/>
</dbReference>
<dbReference type="GO" id="GO:0005737">
    <property type="term" value="C:cytoplasm"/>
    <property type="evidence" value="ECO:0007669"/>
    <property type="project" value="UniProtKB-SubCell"/>
</dbReference>
<dbReference type="GO" id="GO:0004315">
    <property type="term" value="F:3-oxoacyl-[acyl-carrier-protein] synthase activity"/>
    <property type="evidence" value="ECO:0007669"/>
    <property type="project" value="InterPro"/>
</dbReference>
<dbReference type="GO" id="GO:0033818">
    <property type="term" value="F:beta-ketoacyl-acyl-carrier-protein synthase III activity"/>
    <property type="evidence" value="ECO:0007669"/>
    <property type="project" value="UniProtKB-UniRule"/>
</dbReference>
<dbReference type="GO" id="GO:0006633">
    <property type="term" value="P:fatty acid biosynthetic process"/>
    <property type="evidence" value="ECO:0007669"/>
    <property type="project" value="UniProtKB-UniRule"/>
</dbReference>
<dbReference type="GO" id="GO:0044550">
    <property type="term" value="P:secondary metabolite biosynthetic process"/>
    <property type="evidence" value="ECO:0007669"/>
    <property type="project" value="TreeGrafter"/>
</dbReference>
<dbReference type="CDD" id="cd00830">
    <property type="entry name" value="KAS_III"/>
    <property type="match status" value="1"/>
</dbReference>
<dbReference type="FunFam" id="3.40.47.10:FF:000004">
    <property type="entry name" value="3-oxoacyl-[acyl-carrier-protein] synthase 3"/>
    <property type="match status" value="1"/>
</dbReference>
<dbReference type="Gene3D" id="3.40.47.10">
    <property type="match status" value="1"/>
</dbReference>
<dbReference type="HAMAP" id="MF_01815">
    <property type="entry name" value="FabH"/>
    <property type="match status" value="1"/>
</dbReference>
<dbReference type="InterPro" id="IPR013747">
    <property type="entry name" value="ACP_syn_III_C"/>
</dbReference>
<dbReference type="InterPro" id="IPR013751">
    <property type="entry name" value="ACP_syn_III_N"/>
</dbReference>
<dbReference type="InterPro" id="IPR004655">
    <property type="entry name" value="FabH"/>
</dbReference>
<dbReference type="InterPro" id="IPR016039">
    <property type="entry name" value="Thiolase-like"/>
</dbReference>
<dbReference type="NCBIfam" id="TIGR00747">
    <property type="entry name" value="fabH"/>
    <property type="match status" value="1"/>
</dbReference>
<dbReference type="NCBIfam" id="NF006829">
    <property type="entry name" value="PRK09352.1"/>
    <property type="match status" value="1"/>
</dbReference>
<dbReference type="PANTHER" id="PTHR34069">
    <property type="entry name" value="3-OXOACYL-[ACYL-CARRIER-PROTEIN] SYNTHASE 3"/>
    <property type="match status" value="1"/>
</dbReference>
<dbReference type="PANTHER" id="PTHR34069:SF2">
    <property type="entry name" value="BETA-KETOACYL-[ACYL-CARRIER-PROTEIN] SYNTHASE III"/>
    <property type="match status" value="1"/>
</dbReference>
<dbReference type="Pfam" id="PF08545">
    <property type="entry name" value="ACP_syn_III"/>
    <property type="match status" value="1"/>
</dbReference>
<dbReference type="Pfam" id="PF08541">
    <property type="entry name" value="ACP_syn_III_C"/>
    <property type="match status" value="1"/>
</dbReference>
<dbReference type="SUPFAM" id="SSF53901">
    <property type="entry name" value="Thiolase-like"/>
    <property type="match status" value="1"/>
</dbReference>
<proteinExistence type="inferred from homology"/>
<accession>A0PXB6</accession>
<reference key="1">
    <citation type="journal article" date="2006" name="Nat. Biotechnol.">
        <title>The genome and transcriptomes of the anti-tumor agent Clostridium novyi-NT.</title>
        <authorList>
            <person name="Bettegowda C."/>
            <person name="Huang X."/>
            <person name="Lin J."/>
            <person name="Cheong I."/>
            <person name="Kohli M."/>
            <person name="Szabo S.A."/>
            <person name="Zhang X."/>
            <person name="Diaz L.A. Jr."/>
            <person name="Velculescu V.E."/>
            <person name="Parmigiani G."/>
            <person name="Kinzler K.W."/>
            <person name="Vogelstein B."/>
            <person name="Zhou S."/>
        </authorList>
    </citation>
    <scope>NUCLEOTIDE SEQUENCE [LARGE SCALE GENOMIC DNA]</scope>
    <source>
        <strain>NT</strain>
    </source>
</reference>
<organism>
    <name type="scientific">Clostridium novyi (strain NT)</name>
    <dbReference type="NCBI Taxonomy" id="386415"/>
    <lineage>
        <taxon>Bacteria</taxon>
        <taxon>Bacillati</taxon>
        <taxon>Bacillota</taxon>
        <taxon>Clostridia</taxon>
        <taxon>Eubacteriales</taxon>
        <taxon>Clostridiaceae</taxon>
        <taxon>Clostridium</taxon>
    </lineage>
</organism>